<reference key="1">
    <citation type="submission" date="2006-12" db="EMBL/GenBank/DDBJ databases">
        <authorList>
            <consortium name="NIH - Zebrafish Gene Collection (ZGC) project"/>
        </authorList>
    </citation>
    <scope>NUCLEOTIDE SEQUENCE [LARGE SCALE MRNA]</scope>
</reference>
<reference key="2">
    <citation type="journal article" date="2013" name="Nature">
        <title>The zebrafish reference genome sequence and its relationship to the human genome.</title>
        <authorList>
            <person name="Howe K."/>
            <person name="Clark M.D."/>
            <person name="Torroja C.F."/>
            <person name="Torrance J."/>
            <person name="Berthelot C."/>
            <person name="Muffato M."/>
            <person name="Collins J.E."/>
            <person name="Humphray S."/>
            <person name="McLaren K."/>
            <person name="Matthews L."/>
            <person name="McLaren S."/>
            <person name="Sealy I."/>
            <person name="Caccamo M."/>
            <person name="Churcher C."/>
            <person name="Scott C."/>
            <person name="Barrett J.C."/>
            <person name="Koch R."/>
            <person name="Rauch G.J."/>
            <person name="White S."/>
            <person name="Chow W."/>
            <person name="Kilian B."/>
            <person name="Quintais L.T."/>
            <person name="Guerra-Assuncao J.A."/>
            <person name="Zhou Y."/>
            <person name="Gu Y."/>
            <person name="Yen J."/>
            <person name="Vogel J.H."/>
            <person name="Eyre T."/>
            <person name="Redmond S."/>
            <person name="Banerjee R."/>
            <person name="Chi J."/>
            <person name="Fu B."/>
            <person name="Langley E."/>
            <person name="Maguire S.F."/>
            <person name="Laird G.K."/>
            <person name="Lloyd D."/>
            <person name="Kenyon E."/>
            <person name="Donaldson S."/>
            <person name="Sehra H."/>
            <person name="Almeida-King J."/>
            <person name="Loveland J."/>
            <person name="Trevanion S."/>
            <person name="Jones M."/>
            <person name="Quail M."/>
            <person name="Willey D."/>
            <person name="Hunt A."/>
            <person name="Burton J."/>
            <person name="Sims S."/>
            <person name="McLay K."/>
            <person name="Plumb B."/>
            <person name="Davis J."/>
            <person name="Clee C."/>
            <person name="Oliver K."/>
            <person name="Clark R."/>
            <person name="Riddle C."/>
            <person name="Elliot D."/>
            <person name="Threadgold G."/>
            <person name="Harden G."/>
            <person name="Ware D."/>
            <person name="Begum S."/>
            <person name="Mortimore B."/>
            <person name="Kerry G."/>
            <person name="Heath P."/>
            <person name="Phillimore B."/>
            <person name="Tracey A."/>
            <person name="Corby N."/>
            <person name="Dunn M."/>
            <person name="Johnson C."/>
            <person name="Wood J."/>
            <person name="Clark S."/>
            <person name="Pelan S."/>
            <person name="Griffiths G."/>
            <person name="Smith M."/>
            <person name="Glithero R."/>
            <person name="Howden P."/>
            <person name="Barker N."/>
            <person name="Lloyd C."/>
            <person name="Stevens C."/>
            <person name="Harley J."/>
            <person name="Holt K."/>
            <person name="Panagiotidis G."/>
            <person name="Lovell J."/>
            <person name="Beasley H."/>
            <person name="Henderson C."/>
            <person name="Gordon D."/>
            <person name="Auger K."/>
            <person name="Wright D."/>
            <person name="Collins J."/>
            <person name="Raisen C."/>
            <person name="Dyer L."/>
            <person name="Leung K."/>
            <person name="Robertson L."/>
            <person name="Ambridge K."/>
            <person name="Leongamornlert D."/>
            <person name="McGuire S."/>
            <person name="Gilderthorp R."/>
            <person name="Griffiths C."/>
            <person name="Manthravadi D."/>
            <person name="Nichol S."/>
            <person name="Barker G."/>
            <person name="Whitehead S."/>
            <person name="Kay M."/>
            <person name="Brown J."/>
            <person name="Murnane C."/>
            <person name="Gray E."/>
            <person name="Humphries M."/>
            <person name="Sycamore N."/>
            <person name="Barker D."/>
            <person name="Saunders D."/>
            <person name="Wallis J."/>
            <person name="Babbage A."/>
            <person name="Hammond S."/>
            <person name="Mashreghi-Mohammadi M."/>
            <person name="Barr L."/>
            <person name="Martin S."/>
            <person name="Wray P."/>
            <person name="Ellington A."/>
            <person name="Matthews N."/>
            <person name="Ellwood M."/>
            <person name="Woodmansey R."/>
            <person name="Clark G."/>
            <person name="Cooper J."/>
            <person name="Tromans A."/>
            <person name="Grafham D."/>
            <person name="Skuce C."/>
            <person name="Pandian R."/>
            <person name="Andrews R."/>
            <person name="Harrison E."/>
            <person name="Kimberley A."/>
            <person name="Garnett J."/>
            <person name="Fosker N."/>
            <person name="Hall R."/>
            <person name="Garner P."/>
            <person name="Kelly D."/>
            <person name="Bird C."/>
            <person name="Palmer S."/>
            <person name="Gehring I."/>
            <person name="Berger A."/>
            <person name="Dooley C.M."/>
            <person name="Ersan-Urun Z."/>
            <person name="Eser C."/>
            <person name="Geiger H."/>
            <person name="Geisler M."/>
            <person name="Karotki L."/>
            <person name="Kirn A."/>
            <person name="Konantz J."/>
            <person name="Konantz M."/>
            <person name="Oberlander M."/>
            <person name="Rudolph-Geiger S."/>
            <person name="Teucke M."/>
            <person name="Lanz C."/>
            <person name="Raddatz G."/>
            <person name="Osoegawa K."/>
            <person name="Zhu B."/>
            <person name="Rapp A."/>
            <person name="Widaa S."/>
            <person name="Langford C."/>
            <person name="Yang F."/>
            <person name="Schuster S.C."/>
            <person name="Carter N.P."/>
            <person name="Harrow J."/>
            <person name="Ning Z."/>
            <person name="Herrero J."/>
            <person name="Searle S.M."/>
            <person name="Enright A."/>
            <person name="Geisler R."/>
            <person name="Plasterk R.H."/>
            <person name="Lee C."/>
            <person name="Westerfield M."/>
            <person name="de Jong P.J."/>
            <person name="Zon L.I."/>
            <person name="Postlethwait J.H."/>
            <person name="Nusslein-Volhard C."/>
            <person name="Hubbard T.J."/>
            <person name="Roest Crollius H."/>
            <person name="Rogers J."/>
            <person name="Stemple D.L."/>
        </authorList>
    </citation>
    <scope>NUCLEOTIDE SEQUENCE [LARGE SCALE GENOMIC DNA]</scope>
    <source>
        <strain>Tuebingen</strain>
    </source>
</reference>
<reference key="3">
    <citation type="journal article" date="2010" name="J. Biol. Chem.">
        <title>Mys protein regulates protein kinase A activity by interacting with regulatory type Ialpha subunit during vertebrate development.</title>
        <authorList>
            <person name="Kotani T."/>
            <person name="Iemura S."/>
            <person name="Natsume T."/>
            <person name="Kawakami K."/>
            <person name="Yamashita M."/>
        </authorList>
    </citation>
    <scope>INTERACTION WITH PRRC1</scope>
    <source>
        <strain>Tuebingen</strain>
    </source>
</reference>
<proteinExistence type="evidence at protein level"/>
<protein>
    <recommendedName>
        <fullName>cAMP-dependent protein kinase type I-alpha regulatory subunit</fullName>
    </recommendedName>
</protein>
<name>KAP0_DANRE</name>
<keyword id="KW-0007">Acetylation</keyword>
<keyword id="KW-0114">cAMP</keyword>
<keyword id="KW-0116">cAMP-binding</keyword>
<keyword id="KW-1003">Cell membrane</keyword>
<keyword id="KW-1015">Disulfide bond</keyword>
<keyword id="KW-0418">Kinase</keyword>
<keyword id="KW-0472">Membrane</keyword>
<keyword id="KW-0547">Nucleotide-binding</keyword>
<keyword id="KW-0597">Phosphoprotein</keyword>
<keyword id="KW-1185">Reference proteome</keyword>
<keyword id="KW-0677">Repeat</keyword>
<keyword id="KW-0808">Transferase</keyword>
<dbReference type="EMBL" id="BX897685">
    <property type="status" value="NOT_ANNOTATED_CDS"/>
    <property type="molecule type" value="Genomic_DNA"/>
</dbReference>
<dbReference type="EMBL" id="BC088390">
    <property type="protein sequence ID" value="AAH88390.1"/>
    <property type="molecule type" value="mRNA"/>
</dbReference>
<dbReference type="EMBL" id="BC128799">
    <property type="protein sequence ID" value="AAI28800.1"/>
    <property type="molecule type" value="mRNA"/>
</dbReference>
<dbReference type="RefSeq" id="NP_001009989.1">
    <property type="nucleotide sequence ID" value="NM_001009989.3"/>
</dbReference>
<dbReference type="RefSeq" id="XP_005164080.1">
    <property type="nucleotide sequence ID" value="XM_005164023.4"/>
</dbReference>
<dbReference type="SMR" id="Q5I0F6"/>
<dbReference type="FunCoup" id="Q5I0F6">
    <property type="interactions" value="1446"/>
</dbReference>
<dbReference type="STRING" id="7955.ENSDARP00000121293"/>
<dbReference type="PaxDb" id="7955-ENSDARP00000121293"/>
<dbReference type="Ensembl" id="ENSDART00000141638">
    <property type="protein sequence ID" value="ENSDARP00000121293"/>
    <property type="gene ID" value="ENSDARG00000076128"/>
</dbReference>
<dbReference type="GeneID" id="494533"/>
<dbReference type="KEGG" id="dre:494533"/>
<dbReference type="AGR" id="ZFIN:ZDB-GENE-050116-2"/>
<dbReference type="CTD" id="494533"/>
<dbReference type="ZFIN" id="ZDB-GENE-050116-2">
    <property type="gene designation" value="prkar1aa"/>
</dbReference>
<dbReference type="eggNOG" id="KOG1113">
    <property type="taxonomic scope" value="Eukaryota"/>
</dbReference>
<dbReference type="HOGENOM" id="CLU_018310_1_0_1"/>
<dbReference type="OMA" id="QIEYHIS"/>
<dbReference type="OrthoDB" id="417078at2759"/>
<dbReference type="TreeFam" id="TF314920"/>
<dbReference type="Reactome" id="R-DRE-163615">
    <property type="pathway name" value="PKA activation"/>
</dbReference>
<dbReference type="Reactome" id="R-DRE-164378">
    <property type="pathway name" value="PKA activation in glucagon signalling"/>
</dbReference>
<dbReference type="Reactome" id="R-DRE-180024">
    <property type="pathway name" value="DARPP-32 events"/>
</dbReference>
<dbReference type="Reactome" id="R-DRE-432040">
    <property type="pathway name" value="Vasopressin regulates renal water homeostasis via Aquaporins"/>
</dbReference>
<dbReference type="Reactome" id="R-DRE-442720">
    <property type="pathway name" value="CREB1 phosphorylation through the activation of Adenylate Cyclase"/>
</dbReference>
<dbReference type="Reactome" id="R-DRE-5610787">
    <property type="pathway name" value="Hedgehog 'off' state"/>
</dbReference>
<dbReference type="Reactome" id="R-DRE-9634597">
    <property type="pathway name" value="GPER1 signaling"/>
</dbReference>
<dbReference type="Reactome" id="R-DRE-983231">
    <property type="pathway name" value="Factors involved in megakaryocyte development and platelet production"/>
</dbReference>
<dbReference type="Reactome" id="R-DRE-9856530">
    <property type="pathway name" value="High laminar flow shear stress activates signaling by PIEZO1 and PECAM1:CDH5:KDR in endothelial cells"/>
</dbReference>
<dbReference type="Proteomes" id="UP000000437">
    <property type="component" value="Chromosome 3"/>
</dbReference>
<dbReference type="Bgee" id="ENSDARG00000076128">
    <property type="expression patterns" value="Expressed in swim bladder and 26 other cell types or tissues"/>
</dbReference>
<dbReference type="GO" id="GO:0005952">
    <property type="term" value="C:cAMP-dependent protein kinase complex"/>
    <property type="evidence" value="ECO:0000318"/>
    <property type="project" value="GO_Central"/>
</dbReference>
<dbReference type="GO" id="GO:0005829">
    <property type="term" value="C:cytosol"/>
    <property type="evidence" value="ECO:0000318"/>
    <property type="project" value="GO_Central"/>
</dbReference>
<dbReference type="GO" id="GO:0005886">
    <property type="term" value="C:plasma membrane"/>
    <property type="evidence" value="ECO:0007669"/>
    <property type="project" value="UniProtKB-SubCell"/>
</dbReference>
<dbReference type="GO" id="GO:0030552">
    <property type="term" value="F:cAMP binding"/>
    <property type="evidence" value="ECO:0000318"/>
    <property type="project" value="GO_Central"/>
</dbReference>
<dbReference type="GO" id="GO:0004862">
    <property type="term" value="F:cAMP-dependent protein kinase inhibitor activity"/>
    <property type="evidence" value="ECO:0000318"/>
    <property type="project" value="GO_Central"/>
</dbReference>
<dbReference type="GO" id="GO:0016301">
    <property type="term" value="F:kinase activity"/>
    <property type="evidence" value="ECO:0007669"/>
    <property type="project" value="UniProtKB-KW"/>
</dbReference>
<dbReference type="GO" id="GO:0034236">
    <property type="term" value="F:protein kinase A catalytic subunit binding"/>
    <property type="evidence" value="ECO:0000318"/>
    <property type="project" value="GO_Central"/>
</dbReference>
<dbReference type="GO" id="GO:0007189">
    <property type="term" value="P:adenylate cyclase-activating G protein-coupled receptor signaling pathway"/>
    <property type="evidence" value="ECO:0000318"/>
    <property type="project" value="GO_Central"/>
</dbReference>
<dbReference type="CDD" id="cd00038">
    <property type="entry name" value="CAP_ED"/>
    <property type="match status" value="2"/>
</dbReference>
<dbReference type="CDD" id="cd12101">
    <property type="entry name" value="DD_RIalpha_PKA"/>
    <property type="match status" value="1"/>
</dbReference>
<dbReference type="FunFam" id="2.60.120.10:FF:000013">
    <property type="entry name" value="cAMP-dependent protein kinase type I regulatory subunit"/>
    <property type="match status" value="1"/>
</dbReference>
<dbReference type="FunFam" id="1.20.890.10:FF:000001">
    <property type="entry name" value="cAMP-dependent protein kinase type I-alpha regulatory subunit"/>
    <property type="match status" value="1"/>
</dbReference>
<dbReference type="FunFam" id="2.60.120.10:FF:000006">
    <property type="entry name" value="cAMP-dependent protein kinase type I-alpha regulatory subunit"/>
    <property type="match status" value="1"/>
</dbReference>
<dbReference type="Gene3D" id="1.20.890.10">
    <property type="entry name" value="cAMP-dependent protein kinase regulatory subunit, dimerization-anchoring domain"/>
    <property type="match status" value="1"/>
</dbReference>
<dbReference type="Gene3D" id="2.60.120.10">
    <property type="entry name" value="Jelly Rolls"/>
    <property type="match status" value="2"/>
</dbReference>
<dbReference type="InterPro" id="IPR050503">
    <property type="entry name" value="cAMP-dep_PK_reg_su-like"/>
</dbReference>
<dbReference type="InterPro" id="IPR012198">
    <property type="entry name" value="cAMP_dep_PK_reg_su"/>
</dbReference>
<dbReference type="InterPro" id="IPR003117">
    <property type="entry name" value="cAMP_dep_PK_reg_su_I/II_a/b"/>
</dbReference>
<dbReference type="InterPro" id="IPR018488">
    <property type="entry name" value="cNMP-bd_CS"/>
</dbReference>
<dbReference type="InterPro" id="IPR000595">
    <property type="entry name" value="cNMP-bd_dom"/>
</dbReference>
<dbReference type="InterPro" id="IPR018490">
    <property type="entry name" value="cNMP-bd_dom_sf"/>
</dbReference>
<dbReference type="InterPro" id="IPR014710">
    <property type="entry name" value="RmlC-like_jellyroll"/>
</dbReference>
<dbReference type="PANTHER" id="PTHR11635">
    <property type="entry name" value="CAMP-DEPENDENT PROTEIN KINASE REGULATORY CHAIN"/>
    <property type="match status" value="1"/>
</dbReference>
<dbReference type="PANTHER" id="PTHR11635:SF129">
    <property type="entry name" value="CAMP-DEPENDENT PROTEIN KINASE TYPE I-ALPHA REGULATORY SUBUNIT"/>
    <property type="match status" value="1"/>
</dbReference>
<dbReference type="Pfam" id="PF00027">
    <property type="entry name" value="cNMP_binding"/>
    <property type="match status" value="2"/>
</dbReference>
<dbReference type="Pfam" id="PF02197">
    <property type="entry name" value="RIIa"/>
    <property type="match status" value="1"/>
</dbReference>
<dbReference type="PIRSF" id="PIRSF000548">
    <property type="entry name" value="PK_regulatory"/>
    <property type="match status" value="1"/>
</dbReference>
<dbReference type="PRINTS" id="PR00103">
    <property type="entry name" value="CAMPKINASE"/>
</dbReference>
<dbReference type="SMART" id="SM00100">
    <property type="entry name" value="cNMP"/>
    <property type="match status" value="2"/>
</dbReference>
<dbReference type="SMART" id="SM00394">
    <property type="entry name" value="RIIa"/>
    <property type="match status" value="1"/>
</dbReference>
<dbReference type="SUPFAM" id="SSF51206">
    <property type="entry name" value="cAMP-binding domain-like"/>
    <property type="match status" value="2"/>
</dbReference>
<dbReference type="SUPFAM" id="SSF47391">
    <property type="entry name" value="Dimerization-anchoring domain of cAMP-dependent PK regulatory subunit"/>
    <property type="match status" value="1"/>
</dbReference>
<dbReference type="PROSITE" id="PS00888">
    <property type="entry name" value="CNMP_BINDING_1"/>
    <property type="match status" value="2"/>
</dbReference>
<dbReference type="PROSITE" id="PS00889">
    <property type="entry name" value="CNMP_BINDING_2"/>
    <property type="match status" value="2"/>
</dbReference>
<dbReference type="PROSITE" id="PS50042">
    <property type="entry name" value="CNMP_BINDING_3"/>
    <property type="match status" value="2"/>
</dbReference>
<accession>Q5I0F6</accession>
<accession>A1A5T5</accession>
<accession>F6P5L1</accession>
<sequence>MASSSTSSEEERSLRECERYVQKHNIQQLLKDCIVQLCTARPERPMAYLRDYFEKLELEEAKQMVSQQKSSSRSDSREDEVSPPMNPVVKGRRRRGAISAEVYTEEDATSYVRKVIPKDYKTMAALAKAIEKNVLFAHLDDNERSDIFDAMFSVTYIAGETVIQQGDEGDNFYVIDQGEMDVYVNNEWVTSIGEGGSFGELALIYGTPRAATVRAKTNVKLWGIDRDSYRRILMGSTLRKRKMYEEFLSKVSILESLDKWERLTVADALETVQFEDGQKIVVQGQPGDEFFIILEGSAAVLQRRSENEEFVEVGRLAPSDYFGEIALLMNRPRAATVVARGPLKCVKLDRPRFERVLGPCSDILKRNIQQYNSFVSLSV</sequence>
<organism>
    <name type="scientific">Danio rerio</name>
    <name type="common">Zebrafish</name>
    <name type="synonym">Brachydanio rerio</name>
    <dbReference type="NCBI Taxonomy" id="7955"/>
    <lineage>
        <taxon>Eukaryota</taxon>
        <taxon>Metazoa</taxon>
        <taxon>Chordata</taxon>
        <taxon>Craniata</taxon>
        <taxon>Vertebrata</taxon>
        <taxon>Euteleostomi</taxon>
        <taxon>Actinopterygii</taxon>
        <taxon>Neopterygii</taxon>
        <taxon>Teleostei</taxon>
        <taxon>Ostariophysi</taxon>
        <taxon>Cypriniformes</taxon>
        <taxon>Danionidae</taxon>
        <taxon>Danioninae</taxon>
        <taxon>Danio</taxon>
    </lineage>
</organism>
<evidence type="ECO:0000250" key="1"/>
<evidence type="ECO:0000250" key="2">
    <source>
        <dbReference type="UniProtKB" id="P00514"/>
    </source>
</evidence>
<evidence type="ECO:0000250" key="3">
    <source>
        <dbReference type="UniProtKB" id="P10644"/>
    </source>
</evidence>
<evidence type="ECO:0000256" key="4">
    <source>
        <dbReference type="SAM" id="MobiDB-lite"/>
    </source>
</evidence>
<evidence type="ECO:0000269" key="5">
    <source>
    </source>
</evidence>
<evidence type="ECO:0000305" key="6"/>
<comment type="function">
    <text evidence="3">Regulatory subunit of the cAMP-dependent protein kinases involved in cAMP signaling in cells.</text>
</comment>
<comment type="subunit">
    <text evidence="1 3 5">The inactive holoenzyme is composed of two regulatory chains and two catalytic chains. Activation by cAMP releases the two active catalytic monomers and the regulatory dimer. Interacts with PRKACA and PRKACB (By similarity). Interacts with PRRC1; resulting in PKA activation (PubMed:20018846).</text>
</comment>
<comment type="subcellular location">
    <subcellularLocation>
        <location evidence="3">Cell membrane</location>
    </subcellularLocation>
</comment>
<comment type="PTM">
    <text evidence="3">The pseudophosphorylation site binds to the substrate-binding region of the catalytic chain, resulting in the inhibition of its activity.</text>
</comment>
<comment type="similarity">
    <text evidence="6">Belongs to the cAMP-dependent kinase regulatory chain family.</text>
</comment>
<feature type="chain" id="PRO_0000459798" description="cAMP-dependent protein kinase type I-alpha regulatory subunit">
    <location>
        <begin position="1"/>
        <end position="379"/>
    </location>
</feature>
<feature type="region of interest" description="Dimerization and phosphorylation" evidence="3">
    <location>
        <begin position="1"/>
        <end position="134"/>
    </location>
</feature>
<feature type="region of interest" description="Disordered" evidence="4">
    <location>
        <begin position="63"/>
        <end position="93"/>
    </location>
</feature>
<feature type="short sequence motif" description="Pseudophosphorylation motif" evidence="3">
    <location>
        <begin position="94"/>
        <end position="98"/>
    </location>
</feature>
<feature type="binding site" evidence="3">
    <location>
        <begin position="135"/>
        <end position="252"/>
    </location>
    <ligand>
        <name>3',5'-cyclic AMP</name>
        <dbReference type="ChEBI" id="CHEBI:58165"/>
        <label>1</label>
    </ligand>
</feature>
<feature type="binding site" evidence="3">
    <location>
        <position position="200"/>
    </location>
    <ligand>
        <name>3',5'-cyclic AMP</name>
        <dbReference type="ChEBI" id="CHEBI:58165"/>
        <label>1</label>
    </ligand>
</feature>
<feature type="binding site" evidence="3">
    <location>
        <position position="209"/>
    </location>
    <ligand>
        <name>3',5'-cyclic AMP</name>
        <dbReference type="ChEBI" id="CHEBI:58165"/>
        <label>1</label>
    </ligand>
</feature>
<feature type="binding site" evidence="3">
    <location>
        <begin position="253"/>
        <end position="379"/>
    </location>
    <ligand>
        <name>3',5'-cyclic AMP</name>
        <dbReference type="ChEBI" id="CHEBI:58165"/>
        <label>2</label>
    </ligand>
</feature>
<feature type="binding site" evidence="3">
    <location>
        <position position="324"/>
    </location>
    <ligand>
        <name>3',5'-cyclic AMP</name>
        <dbReference type="ChEBI" id="CHEBI:58165"/>
        <label>2</label>
    </ligand>
</feature>
<feature type="binding site" evidence="3">
    <location>
        <position position="333"/>
    </location>
    <ligand>
        <name>3',5'-cyclic AMP</name>
        <dbReference type="ChEBI" id="CHEBI:58165"/>
        <label>2</label>
    </ligand>
</feature>
<feature type="modified residue" description="N-acetylmethionine" evidence="3">
    <location>
        <position position="1"/>
    </location>
</feature>
<feature type="disulfide bond" description="Interchain (with C-38)" evidence="2">
    <location>
        <position position="17"/>
    </location>
</feature>
<feature type="disulfide bond" description="Interchain (with C-17)" evidence="2">
    <location>
        <position position="38"/>
    </location>
</feature>
<gene>
    <name type="primary">prkar1aa</name>
    <name type="synonym">prkar1a</name>
    <name type="synonym">zgc:92515</name>
</gene>